<proteinExistence type="inferred from homology"/>
<dbReference type="EC" id="6.1.1.2" evidence="1"/>
<dbReference type="EMBL" id="BA000036">
    <property type="protein sequence ID" value="BAB98070.1"/>
    <property type="molecule type" value="Genomic_DNA"/>
</dbReference>
<dbReference type="EMBL" id="BX927149">
    <property type="protein sequence ID" value="CAF19382.1"/>
    <property type="molecule type" value="Genomic_DNA"/>
</dbReference>
<dbReference type="RefSeq" id="NP_599909.1">
    <property type="nucleotide sequence ID" value="NC_003450.3"/>
</dbReference>
<dbReference type="RefSeq" id="WP_011013808.1">
    <property type="nucleotide sequence ID" value="NC_006958.1"/>
</dbReference>
<dbReference type="SMR" id="Q8NSJ4"/>
<dbReference type="STRING" id="196627.cg0779"/>
<dbReference type="GeneID" id="1018676"/>
<dbReference type="KEGG" id="cgb:cg0779"/>
<dbReference type="KEGG" id="cgl:Cgl0677"/>
<dbReference type="PATRIC" id="fig|196627.13.peg.663"/>
<dbReference type="eggNOG" id="COG0180">
    <property type="taxonomic scope" value="Bacteria"/>
</dbReference>
<dbReference type="HOGENOM" id="CLU_029244_1_1_11"/>
<dbReference type="OrthoDB" id="9801042at2"/>
<dbReference type="BioCyc" id="CORYNE:G18NG-10239-MONOMER"/>
<dbReference type="Proteomes" id="UP000000582">
    <property type="component" value="Chromosome"/>
</dbReference>
<dbReference type="Proteomes" id="UP000001009">
    <property type="component" value="Chromosome"/>
</dbReference>
<dbReference type="GO" id="GO:0005829">
    <property type="term" value="C:cytosol"/>
    <property type="evidence" value="ECO:0007669"/>
    <property type="project" value="TreeGrafter"/>
</dbReference>
<dbReference type="GO" id="GO:0005524">
    <property type="term" value="F:ATP binding"/>
    <property type="evidence" value="ECO:0007669"/>
    <property type="project" value="UniProtKB-UniRule"/>
</dbReference>
<dbReference type="GO" id="GO:0004830">
    <property type="term" value="F:tryptophan-tRNA ligase activity"/>
    <property type="evidence" value="ECO:0007669"/>
    <property type="project" value="UniProtKB-UniRule"/>
</dbReference>
<dbReference type="GO" id="GO:0006436">
    <property type="term" value="P:tryptophanyl-tRNA aminoacylation"/>
    <property type="evidence" value="ECO:0007669"/>
    <property type="project" value="UniProtKB-UniRule"/>
</dbReference>
<dbReference type="CDD" id="cd00806">
    <property type="entry name" value="TrpRS_core"/>
    <property type="match status" value="1"/>
</dbReference>
<dbReference type="FunFam" id="1.10.240.10:FF:000002">
    <property type="entry name" value="Tryptophan--tRNA ligase"/>
    <property type="match status" value="1"/>
</dbReference>
<dbReference type="Gene3D" id="3.40.50.620">
    <property type="entry name" value="HUPs"/>
    <property type="match status" value="1"/>
</dbReference>
<dbReference type="Gene3D" id="1.10.240.10">
    <property type="entry name" value="Tyrosyl-Transfer RNA Synthetase"/>
    <property type="match status" value="1"/>
</dbReference>
<dbReference type="HAMAP" id="MF_00140_B">
    <property type="entry name" value="Trp_tRNA_synth_B"/>
    <property type="match status" value="1"/>
</dbReference>
<dbReference type="InterPro" id="IPR002305">
    <property type="entry name" value="aa-tRNA-synth_Ic"/>
</dbReference>
<dbReference type="InterPro" id="IPR014729">
    <property type="entry name" value="Rossmann-like_a/b/a_fold"/>
</dbReference>
<dbReference type="InterPro" id="IPR002306">
    <property type="entry name" value="Trp-tRNA-ligase"/>
</dbReference>
<dbReference type="InterPro" id="IPR024109">
    <property type="entry name" value="Trp-tRNA-ligase_bac-type"/>
</dbReference>
<dbReference type="InterPro" id="IPR050203">
    <property type="entry name" value="Trp-tRNA_synthetase"/>
</dbReference>
<dbReference type="NCBIfam" id="TIGR00233">
    <property type="entry name" value="trpS"/>
    <property type="match status" value="1"/>
</dbReference>
<dbReference type="PANTHER" id="PTHR43766">
    <property type="entry name" value="TRYPTOPHAN--TRNA LIGASE, MITOCHONDRIAL"/>
    <property type="match status" value="1"/>
</dbReference>
<dbReference type="PANTHER" id="PTHR43766:SF1">
    <property type="entry name" value="TRYPTOPHAN--TRNA LIGASE, MITOCHONDRIAL"/>
    <property type="match status" value="1"/>
</dbReference>
<dbReference type="Pfam" id="PF00579">
    <property type="entry name" value="tRNA-synt_1b"/>
    <property type="match status" value="1"/>
</dbReference>
<dbReference type="PRINTS" id="PR01039">
    <property type="entry name" value="TRNASYNTHTRP"/>
</dbReference>
<dbReference type="SUPFAM" id="SSF52374">
    <property type="entry name" value="Nucleotidylyl transferase"/>
    <property type="match status" value="1"/>
</dbReference>
<feature type="chain" id="PRO_0000136626" description="Tryptophan--tRNA ligase">
    <location>
        <begin position="1"/>
        <end position="345"/>
    </location>
</feature>
<feature type="short sequence motif" description="'HIGH' region" evidence="1">
    <location>
        <begin position="22"/>
        <end position="31"/>
    </location>
</feature>
<feature type="short sequence motif" description="'KMSKS' region" evidence="1">
    <location>
        <begin position="207"/>
        <end position="211"/>
    </location>
</feature>
<feature type="binding site" evidence="1">
    <location>
        <begin position="21"/>
        <end position="23"/>
    </location>
    <ligand>
        <name>ATP</name>
        <dbReference type="ChEBI" id="CHEBI:30616"/>
    </ligand>
</feature>
<feature type="binding site" evidence="1">
    <location>
        <begin position="30"/>
        <end position="31"/>
    </location>
    <ligand>
        <name>ATP</name>
        <dbReference type="ChEBI" id="CHEBI:30616"/>
    </ligand>
</feature>
<feature type="binding site" evidence="1">
    <location>
        <position position="147"/>
    </location>
    <ligand>
        <name>L-tryptophan</name>
        <dbReference type="ChEBI" id="CHEBI:57912"/>
    </ligand>
</feature>
<feature type="binding site" evidence="1">
    <location>
        <begin position="159"/>
        <end position="161"/>
    </location>
    <ligand>
        <name>ATP</name>
        <dbReference type="ChEBI" id="CHEBI:30616"/>
    </ligand>
</feature>
<feature type="binding site" evidence="1">
    <location>
        <position position="198"/>
    </location>
    <ligand>
        <name>ATP</name>
        <dbReference type="ChEBI" id="CHEBI:30616"/>
    </ligand>
</feature>
<feature type="binding site" evidence="1">
    <location>
        <begin position="207"/>
        <end position="211"/>
    </location>
    <ligand>
        <name>ATP</name>
        <dbReference type="ChEBI" id="CHEBI:30616"/>
    </ligand>
</feature>
<evidence type="ECO:0000255" key="1">
    <source>
        <dbReference type="HAMAP-Rule" id="MF_00140"/>
    </source>
</evidence>
<sequence length="345" mass="37827">MTTQDKDLTAQTASRVLSGIQPTADSYHLGNYLGAVKQWIDLQDSYDAFYFIPDLHAITVDQEPEELRNRTISGAAQLLALGIDPERSTLFVQSHVPAHAELSWVLTCLTGFGEASRMTQFKDKSSKRGADRTSAGLFTYPMLMAADILLYRPHLVPVGEDQRQHLELTRTLAERFNNRFGKAFEVPEGFIPQGASKIYDLQNPTAKMSKSGDNPKGIINLLDDPKVSTKRIKSAVTDNDGVIAYDPENKPGVSNLLVIQSALTGTSIDSLVDGYQGAGYGALKGDTADALEAFTTPLKAKYDEYMNDRGELERVLAIGAERATEVANETLADVYDKIGFLASRR</sequence>
<comment type="function">
    <text evidence="1">Catalyzes the attachment of tryptophan to tRNA(Trp).</text>
</comment>
<comment type="catalytic activity">
    <reaction evidence="1">
        <text>tRNA(Trp) + L-tryptophan + ATP = L-tryptophyl-tRNA(Trp) + AMP + diphosphate + H(+)</text>
        <dbReference type="Rhea" id="RHEA:24080"/>
        <dbReference type="Rhea" id="RHEA-COMP:9671"/>
        <dbReference type="Rhea" id="RHEA-COMP:9705"/>
        <dbReference type="ChEBI" id="CHEBI:15378"/>
        <dbReference type="ChEBI" id="CHEBI:30616"/>
        <dbReference type="ChEBI" id="CHEBI:33019"/>
        <dbReference type="ChEBI" id="CHEBI:57912"/>
        <dbReference type="ChEBI" id="CHEBI:78442"/>
        <dbReference type="ChEBI" id="CHEBI:78535"/>
        <dbReference type="ChEBI" id="CHEBI:456215"/>
        <dbReference type="EC" id="6.1.1.2"/>
    </reaction>
</comment>
<comment type="subunit">
    <text evidence="1">Homodimer.</text>
</comment>
<comment type="subcellular location">
    <subcellularLocation>
        <location evidence="1">Cytoplasm</location>
    </subcellularLocation>
</comment>
<comment type="similarity">
    <text evidence="1">Belongs to the class-I aminoacyl-tRNA synthetase family.</text>
</comment>
<protein>
    <recommendedName>
        <fullName evidence="1">Tryptophan--tRNA ligase</fullName>
        <ecNumber evidence="1">6.1.1.2</ecNumber>
    </recommendedName>
    <alternativeName>
        <fullName evidence="1">Tryptophanyl-tRNA synthetase</fullName>
        <shortName evidence="1">TrpRS</shortName>
    </alternativeName>
</protein>
<gene>
    <name evidence="1" type="primary">trpS</name>
    <name type="ordered locus">Cgl0677</name>
    <name type="ordered locus">cg0779</name>
</gene>
<accession>Q8NSJ4</accession>
<keyword id="KW-0030">Aminoacyl-tRNA synthetase</keyword>
<keyword id="KW-0067">ATP-binding</keyword>
<keyword id="KW-0963">Cytoplasm</keyword>
<keyword id="KW-0436">Ligase</keyword>
<keyword id="KW-0547">Nucleotide-binding</keyword>
<keyword id="KW-0648">Protein biosynthesis</keyword>
<keyword id="KW-1185">Reference proteome</keyword>
<name>SYW_CORGL</name>
<organism>
    <name type="scientific">Corynebacterium glutamicum (strain ATCC 13032 / DSM 20300 / JCM 1318 / BCRC 11384 / CCUG 27702 / LMG 3730 / NBRC 12168 / NCIMB 10025 / NRRL B-2784 / 534)</name>
    <dbReference type="NCBI Taxonomy" id="196627"/>
    <lineage>
        <taxon>Bacteria</taxon>
        <taxon>Bacillati</taxon>
        <taxon>Actinomycetota</taxon>
        <taxon>Actinomycetes</taxon>
        <taxon>Mycobacteriales</taxon>
        <taxon>Corynebacteriaceae</taxon>
        <taxon>Corynebacterium</taxon>
    </lineage>
</organism>
<reference key="1">
    <citation type="journal article" date="2003" name="Appl. Microbiol. Biotechnol.">
        <title>The Corynebacterium glutamicum genome: features and impacts on biotechnological processes.</title>
        <authorList>
            <person name="Ikeda M."/>
            <person name="Nakagawa S."/>
        </authorList>
    </citation>
    <scope>NUCLEOTIDE SEQUENCE [LARGE SCALE GENOMIC DNA]</scope>
    <source>
        <strain>ATCC 13032 / DSM 20300 / JCM 1318 / BCRC 11384 / CCUG 27702 / LMG 3730 / NBRC 12168 / NCIMB 10025 / NRRL B-2784 / 534</strain>
    </source>
</reference>
<reference key="2">
    <citation type="journal article" date="2003" name="J. Biotechnol.">
        <title>The complete Corynebacterium glutamicum ATCC 13032 genome sequence and its impact on the production of L-aspartate-derived amino acids and vitamins.</title>
        <authorList>
            <person name="Kalinowski J."/>
            <person name="Bathe B."/>
            <person name="Bartels D."/>
            <person name="Bischoff N."/>
            <person name="Bott M."/>
            <person name="Burkovski A."/>
            <person name="Dusch N."/>
            <person name="Eggeling L."/>
            <person name="Eikmanns B.J."/>
            <person name="Gaigalat L."/>
            <person name="Goesmann A."/>
            <person name="Hartmann M."/>
            <person name="Huthmacher K."/>
            <person name="Kraemer R."/>
            <person name="Linke B."/>
            <person name="McHardy A.C."/>
            <person name="Meyer F."/>
            <person name="Moeckel B."/>
            <person name="Pfefferle W."/>
            <person name="Puehler A."/>
            <person name="Rey D.A."/>
            <person name="Rueckert C."/>
            <person name="Rupp O."/>
            <person name="Sahm H."/>
            <person name="Wendisch V.F."/>
            <person name="Wiegraebe I."/>
            <person name="Tauch A."/>
        </authorList>
    </citation>
    <scope>NUCLEOTIDE SEQUENCE [LARGE SCALE GENOMIC DNA]</scope>
    <source>
        <strain>ATCC 13032 / DSM 20300 / JCM 1318 / BCRC 11384 / CCUG 27702 / LMG 3730 / NBRC 12168 / NCIMB 10025 / NRRL B-2784 / 534</strain>
    </source>
</reference>